<name>ASB9_HUMAN</name>
<evidence type="ECO:0000255" key="1">
    <source>
        <dbReference type="PROSITE-ProRule" id="PRU00194"/>
    </source>
</evidence>
<evidence type="ECO:0000269" key="2">
    <source>
    </source>
</evidence>
<evidence type="ECO:0000269" key="3">
    <source>
    </source>
</evidence>
<evidence type="ECO:0000269" key="4">
    <source>
    </source>
</evidence>
<evidence type="ECO:0000269" key="5">
    <source>
    </source>
</evidence>
<evidence type="ECO:0000269" key="6">
    <source>
    </source>
</evidence>
<evidence type="ECO:0000269" key="7">
    <source>
    </source>
</evidence>
<evidence type="ECO:0000303" key="8">
    <source>
    </source>
</evidence>
<evidence type="ECO:0000303" key="9">
    <source>
    </source>
</evidence>
<evidence type="ECO:0000303" key="10">
    <source>
    </source>
</evidence>
<evidence type="ECO:0000303" key="11">
    <source>
    </source>
</evidence>
<evidence type="ECO:0000305" key="12"/>
<evidence type="ECO:0000312" key="13">
    <source>
        <dbReference type="HGNC" id="HGNC:17184"/>
    </source>
</evidence>
<evidence type="ECO:0007744" key="14">
    <source>
        <dbReference type="PDB" id="3ZNG"/>
    </source>
</evidence>
<evidence type="ECO:0007744" key="15">
    <source>
        <dbReference type="PDB" id="6V9H"/>
    </source>
</evidence>
<evidence type="ECO:0007744" key="16">
    <source>
    </source>
</evidence>
<evidence type="ECO:0007744" key="17">
    <source>
    </source>
</evidence>
<evidence type="ECO:0007829" key="18">
    <source>
        <dbReference type="PDB" id="3D9H"/>
    </source>
</evidence>
<evidence type="ECO:0007829" key="19">
    <source>
        <dbReference type="PDB" id="3ZKJ"/>
    </source>
</evidence>
<protein>
    <recommendedName>
        <fullName evidence="12">Ankyrin repeat and SOCS box protein 9</fullName>
        <shortName>ASB-9</shortName>
    </recommendedName>
</protein>
<gene>
    <name evidence="11 13" type="primary">ASB9</name>
</gene>
<sequence>MDGKQGGMDGSKPAGPRDFPGIRLLSNPLMGDAVSDWSPMHEAAIHGHQLSLRNLISQGWAVNIITADHVSPLHEACLGGHLSCVKILLKHGAQVNGVTADWHTPLFNACVSGSWDCVNLLLQHGASVQPESDLASPIHEAARRGHVECVNSLIAYGGNIDHKISHLGTPLYLACENQQRACVKKLLESGADVNQGKGQDSPLHAVARTASEELACLLMDFGADTQAKNAEGKRPVELVPPESPLAQLFLEREGPPSLMQLCRLRIRKCFGIQQHHKITKLVLPEDLKQFLLHL</sequence>
<comment type="function">
    <text evidence="2 3 5 7">Substrate-recognition component of a cullin-5-RING E3 ubiquitin-protein ligase complex (ECS complex, also named CRL5 complex), which mediates the ubiquitination and subsequent proteasomal degradation of target proteins (PubMed:25654263, PubMed:33268465). The ECS(ASB9) complex catalyzes ubiquitination of creatine kinases CKB and CKMT1A (PubMed:20302626, PubMed:22418839, PubMed:25654263, PubMed:33268465).</text>
</comment>
<comment type="function">
    <molecule>Isoform 2</molecule>
    <text evidence="2">Does not interact with the Elongin BC complex, likely to be a negative regulator of isoform 1.</text>
</comment>
<comment type="pathway">
    <text evidence="5 7">Protein modification; protein ubiquitination.</text>
</comment>
<comment type="subunit">
    <text evidence="4 6 7">Substrate-recognition component of the ECS(ASB9) complex, composed of ASB9, CUL5, ELOB, ELOC and RNF7/RBX2.</text>
</comment>
<comment type="interaction">
    <interactant intactId="EBI-745641">
        <id>Q96DX5</id>
    </interactant>
    <interactant intactId="EBI-2880652">
        <id>Q08043</id>
        <label>ACTN3</label>
    </interactant>
    <organismsDiffer>false</organismsDiffer>
    <experiments>3</experiments>
</comment>
<comment type="interaction">
    <interactant intactId="EBI-745641">
        <id>Q96DX5</id>
    </interactant>
    <interactant intactId="EBI-12015080">
        <id>Q8WXK3-2</id>
        <label>ASB13</label>
    </interactant>
    <organismsDiffer>false</organismsDiffer>
    <experiments>3</experiments>
</comment>
<comment type="interaction">
    <interactant intactId="EBI-745641">
        <id>Q96DX5</id>
    </interactant>
    <interactant intactId="EBI-357706">
        <id>P12277</id>
        <label>CKB</label>
    </interactant>
    <organismsDiffer>false</organismsDiffer>
    <experiments>12</experiments>
</comment>
<comment type="interaction">
    <interactant intactId="EBI-745641">
        <id>Q96DX5</id>
    </interactant>
    <interactant intactId="EBI-4287089">
        <id>P06732</id>
        <label>CKM</label>
    </interactant>
    <organismsDiffer>false</organismsDiffer>
    <experiments>12</experiments>
</comment>
<comment type="interaction">
    <interactant intactId="EBI-745641">
        <id>Q96DX5</id>
    </interactant>
    <interactant intactId="EBI-1050662">
        <id>P12532</id>
        <label>CKMT1B</label>
    </interactant>
    <organismsDiffer>false</organismsDiffer>
    <experiments>5</experiments>
</comment>
<comment type="interaction">
    <interactant intactId="EBI-745641">
        <id>Q96DX5</id>
    </interactant>
    <interactant intactId="EBI-886">
        <id>P46108</id>
        <label>CRK</label>
    </interactant>
    <organismsDiffer>false</organismsDiffer>
    <experiments>2</experiments>
</comment>
<comment type="interaction">
    <interactant intactId="EBI-745641">
        <id>Q96DX5</id>
    </interactant>
    <interactant intactId="EBI-10976677">
        <id>G5E9A7</id>
        <label>DMWD</label>
    </interactant>
    <organismsDiffer>false</organismsDiffer>
    <experiments>3</experiments>
</comment>
<comment type="interaction">
    <interactant intactId="EBI-745641">
        <id>Q96DX5</id>
    </interactant>
    <interactant intactId="EBI-301231">
        <id>Q15369</id>
        <label>ELOC</label>
    </interactant>
    <organismsDiffer>false</organismsDiffer>
    <experiments>5</experiments>
</comment>
<comment type="interaction">
    <interactant intactId="EBI-745641">
        <id>Q96DX5</id>
    </interactant>
    <interactant intactId="EBI-371892">
        <id>Q9Y3B2</id>
        <label>EXOSC1</label>
    </interactant>
    <organismsDiffer>false</organismsDiffer>
    <experiments>3</experiments>
</comment>
<comment type="interaction">
    <interactant intactId="EBI-745641">
        <id>Q96DX5</id>
    </interactant>
    <interactant intactId="EBI-10226858">
        <id>Q0VDC6</id>
        <label>FKBP1A</label>
    </interactant>
    <organismsDiffer>false</organismsDiffer>
    <experiments>3</experiments>
</comment>
<comment type="interaction">
    <interactant intactId="EBI-745641">
        <id>Q96DX5</id>
    </interactant>
    <interactant intactId="EBI-10284791">
        <id>V9HWH2</id>
        <label>HEL-S-29</label>
    </interactant>
    <organismsDiffer>false</organismsDiffer>
    <experiments>3</experiments>
</comment>
<comment type="interaction">
    <interactant intactId="EBI-745641">
        <id>Q96DX5</id>
    </interactant>
    <interactant intactId="EBI-745632">
        <id>Q9NWT6</id>
        <label>HIF1AN</label>
    </interactant>
    <organismsDiffer>false</organismsDiffer>
    <experiments>7</experiments>
</comment>
<comment type="interaction">
    <interactant intactId="EBI-745641">
        <id>Q96DX5</id>
    </interactant>
    <interactant intactId="EBI-356991">
        <id>P54652</id>
        <label>HSPA2</label>
    </interactant>
    <organismsDiffer>false</organismsDiffer>
    <experiments>3</experiments>
</comment>
<comment type="interaction">
    <interactant intactId="EBI-745641">
        <id>Q96DX5</id>
    </interactant>
    <interactant intactId="EBI-1055254">
        <id>Q8WXH2</id>
        <label>JPH3</label>
    </interactant>
    <organismsDiffer>false</organismsDiffer>
    <experiments>3</experiments>
</comment>
<comment type="interaction">
    <interactant intactId="EBI-745641">
        <id>Q96DX5</id>
    </interactant>
    <interactant intactId="EBI-10975473">
        <id>O60333-2</id>
        <label>KIF1B</label>
    </interactant>
    <organismsDiffer>false</organismsDiffer>
    <experiments>3</experiments>
</comment>
<comment type="interaction">
    <interactant intactId="EBI-745641">
        <id>Q96DX5</id>
    </interactant>
    <interactant intactId="EBI-13287659">
        <id>P06239-3</id>
        <label>LCK</label>
    </interactant>
    <organismsDiffer>false</organismsDiffer>
    <experiments>3</experiments>
</comment>
<comment type="interaction">
    <interactant intactId="EBI-745641">
        <id>Q96DX5</id>
    </interactant>
    <interactant intactId="EBI-351935">
        <id>P02545</id>
        <label>LMNA</label>
    </interactant>
    <organismsDiffer>false</organismsDiffer>
    <experiments>3</experiments>
</comment>
<comment type="interaction">
    <interactant intactId="EBI-745641">
        <id>Q96DX5</id>
    </interactant>
    <interactant intactId="EBI-21251460">
        <id>O60260-5</id>
        <label>PRKN</label>
    </interactant>
    <organismsDiffer>false</organismsDiffer>
    <experiments>3</experiments>
</comment>
<comment type="interaction">
    <interactant intactId="EBI-745641">
        <id>Q96DX5</id>
    </interactant>
    <interactant intactId="EBI-10489476">
        <id>Q96CP1</id>
        <label>RELA</label>
    </interactant>
    <organismsDiffer>false</organismsDiffer>
    <experiments>3</experiments>
</comment>
<comment type="interaction">
    <interactant intactId="EBI-745641">
        <id>Q96DX5</id>
    </interactant>
    <interactant intactId="EBI-395421">
        <id>Q16637</id>
        <label>SMN2</label>
    </interactant>
    <organismsDiffer>false</organismsDiffer>
    <experiments>3</experiments>
</comment>
<comment type="interaction">
    <interactant intactId="EBI-745641">
        <id>Q96DX5</id>
    </interactant>
    <interactant intactId="EBI-372899">
        <id>Q13148</id>
        <label>TARDBP</label>
    </interactant>
    <organismsDiffer>false</organismsDiffer>
    <experiments>3</experiments>
</comment>
<comment type="interaction">
    <interactant intactId="EBI-25843552">
        <id>Q96DX5-3</id>
    </interactant>
    <interactant intactId="EBI-930964">
        <id>P54253</id>
        <label>ATXN1</label>
    </interactant>
    <organismsDiffer>false</organismsDiffer>
    <experiments>6</experiments>
</comment>
<comment type="interaction">
    <interactant intactId="EBI-25843552">
        <id>Q96DX5-3</id>
    </interactant>
    <interactant intactId="EBI-10988864">
        <id>P46379-2</id>
        <label>BAG6</label>
    </interactant>
    <organismsDiffer>false</organismsDiffer>
    <experiments>3</experiments>
</comment>
<comment type="interaction">
    <interactant intactId="EBI-25843552">
        <id>Q96DX5-3</id>
    </interactant>
    <interactant intactId="EBI-10976677">
        <id>G5E9A7</id>
        <label>DMWD</label>
    </interactant>
    <organismsDiffer>false</organismsDiffer>
    <experiments>3</experiments>
</comment>
<comment type="interaction">
    <interactant intactId="EBI-25843552">
        <id>Q96DX5-3</id>
    </interactant>
    <interactant intactId="EBI-395638">
        <id>O14645</id>
        <label>DNALI1</label>
    </interactant>
    <organismsDiffer>false</organismsDiffer>
    <experiments>3</experiments>
</comment>
<comment type="interaction">
    <interactant intactId="EBI-25843552">
        <id>Q96DX5-3</id>
    </interactant>
    <interactant intactId="EBI-747754">
        <id>P28799</id>
        <label>GRN</label>
    </interactant>
    <organismsDiffer>false</organismsDiffer>
    <experiments>3</experiments>
</comment>
<comment type="interaction">
    <interactant intactId="EBI-25843552">
        <id>Q96DX5-3</id>
    </interactant>
    <interactant intactId="EBI-517086">
        <id>O43464</id>
        <label>HTRA2</label>
    </interactant>
    <organismsDiffer>false</organismsDiffer>
    <experiments>3</experiments>
</comment>
<comment type="interaction">
    <interactant intactId="EBI-25843552">
        <id>Q96DX5-3</id>
    </interactant>
    <interactant intactId="EBI-6398041">
        <id>Q9UMF0</id>
        <label>ICAM5</label>
    </interactant>
    <organismsDiffer>false</organismsDiffer>
    <experiments>3</experiments>
</comment>
<comment type="interaction">
    <interactant intactId="EBI-25843552">
        <id>Q96DX5-3</id>
    </interactant>
    <interactant intactId="EBI-1055254">
        <id>Q8WXH2</id>
        <label>JPH3</label>
    </interactant>
    <organismsDiffer>false</organismsDiffer>
    <experiments>3</experiments>
</comment>
<comment type="interaction">
    <interactant intactId="EBI-25843552">
        <id>Q96DX5-3</id>
    </interactant>
    <interactant intactId="EBI-10975473">
        <id>O60333-2</id>
        <label>KIF1B</label>
    </interactant>
    <organismsDiffer>false</organismsDiffer>
    <experiments>3</experiments>
</comment>
<comment type="interaction">
    <interactant intactId="EBI-25843552">
        <id>Q96DX5-3</id>
    </interactant>
    <interactant intactId="EBI-948266">
        <id>O14901</id>
        <label>KLF11</label>
    </interactant>
    <organismsDiffer>false</organismsDiffer>
    <experiments>3</experiments>
</comment>
<comment type="interaction">
    <interactant intactId="EBI-25843552">
        <id>Q96DX5-3</id>
    </interactant>
    <interactant intactId="EBI-1014514">
        <id>P35240-4</id>
        <label>NF2</label>
    </interactant>
    <organismsDiffer>false</organismsDiffer>
    <experiments>3</experiments>
</comment>
<comment type="interaction">
    <interactant intactId="EBI-25843552">
        <id>Q96DX5-3</id>
    </interactant>
    <interactant intactId="EBI-2811583">
        <id>Q9BVL2</id>
        <label>NUP58</label>
    </interactant>
    <organismsDiffer>false</organismsDiffer>
    <experiments>3</experiments>
</comment>
<comment type="interaction">
    <interactant intactId="EBI-25843552">
        <id>Q96DX5-3</id>
    </interactant>
    <interactant intactId="EBI-50433196">
        <id>A0A6Q8PF08</id>
        <label>PMP22</label>
    </interactant>
    <organismsDiffer>false</organismsDiffer>
    <experiments>3</experiments>
</comment>
<comment type="interaction">
    <interactant intactId="EBI-25843552">
        <id>Q96DX5-3</id>
    </interactant>
    <interactant intactId="EBI-21251460">
        <id>O60260-5</id>
        <label>PRKN</label>
    </interactant>
    <organismsDiffer>false</organismsDiffer>
    <experiments>3</experiments>
</comment>
<comment type="interaction">
    <interactant intactId="EBI-25843552">
        <id>Q96DX5-3</id>
    </interactant>
    <interactant intactId="EBI-5235340">
        <id>Q7Z699</id>
        <label>SPRED1</label>
    </interactant>
    <organismsDiffer>false</organismsDiffer>
    <experiments>3</experiments>
</comment>
<comment type="interaction">
    <interactant intactId="EBI-25843552">
        <id>Q96DX5-3</id>
    </interactant>
    <interactant intactId="EBI-372899">
        <id>Q13148</id>
        <label>TARDBP</label>
    </interactant>
    <organismsDiffer>false</organismsDiffer>
    <experiments>3</experiments>
</comment>
<comment type="interaction">
    <interactant intactId="EBI-25843552">
        <id>Q96DX5-3</id>
    </interactant>
    <interactant intactId="EBI-1048893">
        <id>P54577</id>
        <label>YARS1</label>
    </interactant>
    <organismsDiffer>false</organismsDiffer>
    <experiments>3</experiments>
</comment>
<comment type="subcellular location">
    <subcellularLocation>
        <location evidence="2">Mitochondrion</location>
    </subcellularLocation>
</comment>
<comment type="alternative products">
    <event type="alternative splicing"/>
    <isoform>
        <id>Q96DX5-1</id>
        <name>1</name>
        <sequence type="displayed"/>
    </isoform>
    <isoform>
        <id>Q96DX5-2</id>
        <name>2</name>
        <name>ASB9deltaSOCS</name>
        <sequence type="described" ref="VSP_000271"/>
    </isoform>
    <isoform>
        <id>Q96DX5-3</id>
        <name>3</name>
        <sequence type="described" ref="VSP_043158 VSP_000271"/>
    </isoform>
</comment>
<comment type="tissue specificity">
    <text evidence="2">Predominantly expressed in testis, kidney, and liver.</text>
</comment>
<comment type="similarity">
    <text evidence="12">Belongs to the ankyrin SOCS box (ASB) family.</text>
</comment>
<comment type="sequence caution" evidence="12">
    <conflict type="erroneous initiation">
        <sequence resource="EMBL-CDS" id="CAB45706"/>
    </conflict>
</comment>
<accession>Q96DX5</accession>
<accession>A8K8A5</accession>
<accession>Q9BVF5</accession>
<accession>Q9NWS5</accession>
<accession>Q9Y4T3</accession>
<dbReference type="EMBL" id="AK000643">
    <property type="protein sequence ID" value="BAA91302.1"/>
    <property type="molecule type" value="mRNA"/>
</dbReference>
<dbReference type="EMBL" id="AK292270">
    <property type="protein sequence ID" value="BAF84959.1"/>
    <property type="molecule type" value="mRNA"/>
</dbReference>
<dbReference type="EMBL" id="AL080091">
    <property type="protein sequence ID" value="CAB45706.2"/>
    <property type="status" value="ALT_INIT"/>
    <property type="molecule type" value="mRNA"/>
</dbReference>
<dbReference type="EMBL" id="CH471074">
    <property type="protein sequence ID" value="EAW98871.1"/>
    <property type="molecule type" value="Genomic_DNA"/>
</dbReference>
<dbReference type="EMBL" id="CH471074">
    <property type="protein sequence ID" value="EAW98874.1"/>
    <property type="molecule type" value="Genomic_DNA"/>
</dbReference>
<dbReference type="EMBL" id="BC001244">
    <property type="protein sequence ID" value="AAH01244.1"/>
    <property type="molecule type" value="mRNA"/>
</dbReference>
<dbReference type="EMBL" id="BC013172">
    <property type="protein sequence ID" value="AAH13172.1"/>
    <property type="molecule type" value="mRNA"/>
</dbReference>
<dbReference type="CCDS" id="CCDS14163.1">
    <molecule id="Q96DX5-2"/>
</dbReference>
<dbReference type="CCDS" id="CCDS35208.1">
    <molecule id="Q96DX5-1"/>
</dbReference>
<dbReference type="CCDS" id="CCDS55372.1">
    <molecule id="Q96DX5-3"/>
</dbReference>
<dbReference type="RefSeq" id="NP_001026909.1">
    <molecule id="Q96DX5-1"/>
    <property type="nucleotide sequence ID" value="NM_001031739.3"/>
</dbReference>
<dbReference type="RefSeq" id="NP_001162002.1">
    <molecule id="Q96DX5-3"/>
    <property type="nucleotide sequence ID" value="NM_001168530.2"/>
</dbReference>
<dbReference type="RefSeq" id="NP_001162003.1">
    <molecule id="Q96DX5-2"/>
    <property type="nucleotide sequence ID" value="NM_001168531.2"/>
</dbReference>
<dbReference type="RefSeq" id="NP_076992.1">
    <molecule id="Q96DX5-2"/>
    <property type="nucleotide sequence ID" value="NM_024087.3"/>
</dbReference>
<dbReference type="RefSeq" id="XP_005274503.1">
    <property type="nucleotide sequence ID" value="XM_005274446.1"/>
</dbReference>
<dbReference type="PDB" id="3D9H">
    <property type="method" value="X-ray"/>
    <property type="resolution" value="2.20 A"/>
    <property type="chains" value="A=1-258"/>
</dbReference>
<dbReference type="PDB" id="3ZKJ">
    <property type="method" value="X-ray"/>
    <property type="resolution" value="2.58 A"/>
    <property type="chains" value="A/D=35-294"/>
</dbReference>
<dbReference type="PDB" id="3ZNG">
    <property type="method" value="X-ray"/>
    <property type="resolution" value="2.85 A"/>
    <property type="chains" value="A/D=35-294"/>
</dbReference>
<dbReference type="PDB" id="6V9H">
    <property type="method" value="EM"/>
    <property type="resolution" value="4.10 A"/>
    <property type="chains" value="C=1-294"/>
</dbReference>
<dbReference type="PDBsum" id="3D9H"/>
<dbReference type="PDBsum" id="3ZKJ"/>
<dbReference type="PDBsum" id="3ZNG"/>
<dbReference type="PDBsum" id="6V9H"/>
<dbReference type="EMDB" id="EMD-21120"/>
<dbReference type="SMR" id="Q96DX5"/>
<dbReference type="BioGRID" id="126615">
    <property type="interactions" value="44"/>
</dbReference>
<dbReference type="CORUM" id="Q96DX5"/>
<dbReference type="DIP" id="DIP-52905N"/>
<dbReference type="FunCoup" id="Q96DX5">
    <property type="interactions" value="366"/>
</dbReference>
<dbReference type="IntAct" id="Q96DX5">
    <property type="interactions" value="44"/>
</dbReference>
<dbReference type="MINT" id="Q96DX5"/>
<dbReference type="STRING" id="9606.ENSP00000369855"/>
<dbReference type="iPTMnet" id="Q96DX5"/>
<dbReference type="PhosphoSitePlus" id="Q96DX5"/>
<dbReference type="BioMuta" id="ASB9"/>
<dbReference type="DMDM" id="29839756"/>
<dbReference type="REPRODUCTION-2DPAGE" id="IPI00179183"/>
<dbReference type="jPOST" id="Q96DX5"/>
<dbReference type="MassIVE" id="Q96DX5"/>
<dbReference type="PaxDb" id="9606-ENSP00000369855"/>
<dbReference type="PeptideAtlas" id="Q96DX5"/>
<dbReference type="ProteomicsDB" id="76334">
    <molecule id="Q96DX5-1"/>
</dbReference>
<dbReference type="ProteomicsDB" id="76335">
    <molecule id="Q96DX5-2"/>
</dbReference>
<dbReference type="ProteomicsDB" id="76336">
    <molecule id="Q96DX5-3"/>
</dbReference>
<dbReference type="Pumba" id="Q96DX5"/>
<dbReference type="Antibodypedia" id="502">
    <property type="antibodies" value="168 antibodies from 28 providers"/>
</dbReference>
<dbReference type="DNASU" id="140462"/>
<dbReference type="Ensembl" id="ENST00000380483.7">
    <molecule id="Q96DX5-3"/>
    <property type="protein sequence ID" value="ENSP00000369850.3"/>
    <property type="gene ID" value="ENSG00000102048.16"/>
</dbReference>
<dbReference type="Ensembl" id="ENST00000380485.7">
    <molecule id="Q96DX5-2"/>
    <property type="protein sequence ID" value="ENSP00000369852.3"/>
    <property type="gene ID" value="ENSG00000102048.16"/>
</dbReference>
<dbReference type="Ensembl" id="ENST00000380488.9">
    <molecule id="Q96DX5-1"/>
    <property type="protein sequence ID" value="ENSP00000369855.4"/>
    <property type="gene ID" value="ENSG00000102048.16"/>
</dbReference>
<dbReference type="Ensembl" id="ENST00000546332.1">
    <molecule id="Q96DX5-2"/>
    <property type="protein sequence ID" value="ENSP00000438943.1"/>
    <property type="gene ID" value="ENSG00000102048.16"/>
</dbReference>
<dbReference type="GeneID" id="140462"/>
<dbReference type="KEGG" id="hsa:140462"/>
<dbReference type="MANE-Select" id="ENST00000380488.9">
    <property type="protein sequence ID" value="ENSP00000369855.4"/>
    <property type="RefSeq nucleotide sequence ID" value="NM_001031739.3"/>
    <property type="RefSeq protein sequence ID" value="NP_001026909.1"/>
</dbReference>
<dbReference type="UCSC" id="uc004cwk.4">
    <molecule id="Q96DX5-1"/>
    <property type="organism name" value="human"/>
</dbReference>
<dbReference type="AGR" id="HGNC:17184"/>
<dbReference type="CTD" id="140462"/>
<dbReference type="DisGeNET" id="140462"/>
<dbReference type="GeneCards" id="ASB9"/>
<dbReference type="HGNC" id="HGNC:17184">
    <property type="gene designation" value="ASB9"/>
</dbReference>
<dbReference type="HPA" id="ENSG00000102048">
    <property type="expression patterns" value="Tissue enhanced (kidney, liver, testis)"/>
</dbReference>
<dbReference type="MIM" id="300890">
    <property type="type" value="gene"/>
</dbReference>
<dbReference type="neXtProt" id="NX_Q96DX5"/>
<dbReference type="OpenTargets" id="ENSG00000102048"/>
<dbReference type="PharmGKB" id="PA25037"/>
<dbReference type="VEuPathDB" id="HostDB:ENSG00000102048"/>
<dbReference type="eggNOG" id="KOG0504">
    <property type="taxonomic scope" value="Eukaryota"/>
</dbReference>
<dbReference type="GeneTree" id="ENSGT00940000157160"/>
<dbReference type="HOGENOM" id="CLU_000134_4_0_1"/>
<dbReference type="InParanoid" id="Q96DX5"/>
<dbReference type="OMA" id="QHHKITG"/>
<dbReference type="OrthoDB" id="3246549at2759"/>
<dbReference type="PAN-GO" id="Q96DX5">
    <property type="GO annotations" value="2 GO annotations based on evolutionary models"/>
</dbReference>
<dbReference type="PhylomeDB" id="Q96DX5"/>
<dbReference type="TreeFam" id="TF331945"/>
<dbReference type="PathwayCommons" id="Q96DX5"/>
<dbReference type="Reactome" id="R-HSA-8951664">
    <property type="pathway name" value="Neddylation"/>
</dbReference>
<dbReference type="Reactome" id="R-HSA-983168">
    <property type="pathway name" value="Antigen processing: Ubiquitination &amp; Proteasome degradation"/>
</dbReference>
<dbReference type="SignaLink" id="Q96DX5"/>
<dbReference type="SIGNOR" id="Q96DX5"/>
<dbReference type="UniPathway" id="UPA00143"/>
<dbReference type="BioGRID-ORCS" id="140462">
    <property type="hits" value="10 hits in 813 CRISPR screens"/>
</dbReference>
<dbReference type="EvolutionaryTrace" id="Q96DX5"/>
<dbReference type="GenomeRNAi" id="140462"/>
<dbReference type="Pharos" id="Q96DX5">
    <property type="development level" value="Tbio"/>
</dbReference>
<dbReference type="PRO" id="PR:Q96DX5"/>
<dbReference type="Proteomes" id="UP000005640">
    <property type="component" value="Chromosome X"/>
</dbReference>
<dbReference type="RNAct" id="Q96DX5">
    <property type="molecule type" value="protein"/>
</dbReference>
<dbReference type="Bgee" id="ENSG00000102048">
    <property type="expression patterns" value="Expressed in male germ line stem cell (sensu Vertebrata) in testis and 115 other cell types or tissues"/>
</dbReference>
<dbReference type="ExpressionAtlas" id="Q96DX5">
    <property type="expression patterns" value="baseline and differential"/>
</dbReference>
<dbReference type="GO" id="GO:0031466">
    <property type="term" value="C:Cul5-RING ubiquitin ligase complex"/>
    <property type="evidence" value="ECO:0000314"/>
    <property type="project" value="UniProtKB"/>
</dbReference>
<dbReference type="GO" id="GO:0005829">
    <property type="term" value="C:cytosol"/>
    <property type="evidence" value="ECO:0000304"/>
    <property type="project" value="Reactome"/>
</dbReference>
<dbReference type="GO" id="GO:0005739">
    <property type="term" value="C:mitochondrion"/>
    <property type="evidence" value="ECO:0007669"/>
    <property type="project" value="UniProtKB-SubCell"/>
</dbReference>
<dbReference type="GO" id="GO:1990756">
    <property type="term" value="F:ubiquitin-like ligase-substrate adaptor activity"/>
    <property type="evidence" value="ECO:0000314"/>
    <property type="project" value="UniProtKB"/>
</dbReference>
<dbReference type="GO" id="GO:0035556">
    <property type="term" value="P:intracellular signal transduction"/>
    <property type="evidence" value="ECO:0007669"/>
    <property type="project" value="InterPro"/>
</dbReference>
<dbReference type="GO" id="GO:0045732">
    <property type="term" value="P:positive regulation of protein catabolic process"/>
    <property type="evidence" value="ECO:0000314"/>
    <property type="project" value="MGI"/>
</dbReference>
<dbReference type="GO" id="GO:0043161">
    <property type="term" value="P:proteasome-mediated ubiquitin-dependent protein catabolic process"/>
    <property type="evidence" value="ECO:0000314"/>
    <property type="project" value="UniProtKB"/>
</dbReference>
<dbReference type="GO" id="GO:0016567">
    <property type="term" value="P:protein ubiquitination"/>
    <property type="evidence" value="ECO:0000314"/>
    <property type="project" value="MGI"/>
</dbReference>
<dbReference type="CDD" id="cd03728">
    <property type="entry name" value="SOCS_ASB_9_11"/>
    <property type="match status" value="1"/>
</dbReference>
<dbReference type="FunFam" id="1.10.750.20:FF:000001">
    <property type="entry name" value="Ankyrin repeat and SOCS box containing 1"/>
    <property type="match status" value="1"/>
</dbReference>
<dbReference type="FunFam" id="1.25.40.20:FF:000016">
    <property type="entry name" value="Ankyrin repeat and SOCS box containing 5"/>
    <property type="match status" value="1"/>
</dbReference>
<dbReference type="Gene3D" id="1.25.40.20">
    <property type="entry name" value="Ankyrin repeat-containing domain"/>
    <property type="match status" value="1"/>
</dbReference>
<dbReference type="Gene3D" id="1.10.750.20">
    <property type="entry name" value="SOCS box"/>
    <property type="match status" value="1"/>
</dbReference>
<dbReference type="InterPro" id="IPR051573">
    <property type="entry name" value="Ankyrin-SOCS_box_domain"/>
</dbReference>
<dbReference type="InterPro" id="IPR002110">
    <property type="entry name" value="Ankyrin_rpt"/>
</dbReference>
<dbReference type="InterPro" id="IPR036770">
    <property type="entry name" value="Ankyrin_rpt-contain_sf"/>
</dbReference>
<dbReference type="InterPro" id="IPR037333">
    <property type="entry name" value="ASB9/11_SOCS"/>
</dbReference>
<dbReference type="InterPro" id="IPR001496">
    <property type="entry name" value="SOCS_box"/>
</dbReference>
<dbReference type="InterPro" id="IPR036036">
    <property type="entry name" value="SOCS_box-like_dom_sf"/>
</dbReference>
<dbReference type="PANTHER" id="PTHR24136:SF17">
    <property type="entry name" value="ANKYRIN REPEAT AND SOCS BOX PROTEIN 9"/>
    <property type="match status" value="1"/>
</dbReference>
<dbReference type="PANTHER" id="PTHR24136">
    <property type="entry name" value="SOWAH (DROSOPHILA) HOMOLOG"/>
    <property type="match status" value="1"/>
</dbReference>
<dbReference type="Pfam" id="PF12796">
    <property type="entry name" value="Ank_2"/>
    <property type="match status" value="2"/>
</dbReference>
<dbReference type="Pfam" id="PF07525">
    <property type="entry name" value="SOCS_box"/>
    <property type="match status" value="1"/>
</dbReference>
<dbReference type="SMART" id="SM00248">
    <property type="entry name" value="ANK"/>
    <property type="match status" value="6"/>
</dbReference>
<dbReference type="SMART" id="SM00969">
    <property type="entry name" value="SOCS_box"/>
    <property type="match status" value="1"/>
</dbReference>
<dbReference type="SUPFAM" id="SSF48403">
    <property type="entry name" value="Ankyrin repeat"/>
    <property type="match status" value="1"/>
</dbReference>
<dbReference type="SUPFAM" id="SSF158235">
    <property type="entry name" value="SOCS box-like"/>
    <property type="match status" value="1"/>
</dbReference>
<dbReference type="PROSITE" id="PS50297">
    <property type="entry name" value="ANK_REP_REGION"/>
    <property type="match status" value="1"/>
</dbReference>
<dbReference type="PROSITE" id="PS50088">
    <property type="entry name" value="ANK_REPEAT"/>
    <property type="match status" value="5"/>
</dbReference>
<dbReference type="PROSITE" id="PS50225">
    <property type="entry name" value="SOCS"/>
    <property type="match status" value="1"/>
</dbReference>
<keyword id="KW-0002">3D-structure</keyword>
<keyword id="KW-0007">Acetylation</keyword>
<keyword id="KW-0025">Alternative splicing</keyword>
<keyword id="KW-0040">ANK repeat</keyword>
<keyword id="KW-0496">Mitochondrion</keyword>
<keyword id="KW-0597">Phosphoprotein</keyword>
<keyword id="KW-1267">Proteomics identification</keyword>
<keyword id="KW-1185">Reference proteome</keyword>
<keyword id="KW-0677">Repeat</keyword>
<keyword id="KW-0833">Ubl conjugation pathway</keyword>
<reference key="1">
    <citation type="journal article" date="2004" name="Nat. Genet.">
        <title>Complete sequencing and characterization of 21,243 full-length human cDNAs.</title>
        <authorList>
            <person name="Ota T."/>
            <person name="Suzuki Y."/>
            <person name="Nishikawa T."/>
            <person name="Otsuki T."/>
            <person name="Sugiyama T."/>
            <person name="Irie R."/>
            <person name="Wakamatsu A."/>
            <person name="Hayashi K."/>
            <person name="Sato H."/>
            <person name="Nagai K."/>
            <person name="Kimura K."/>
            <person name="Makita H."/>
            <person name="Sekine M."/>
            <person name="Obayashi M."/>
            <person name="Nishi T."/>
            <person name="Shibahara T."/>
            <person name="Tanaka T."/>
            <person name="Ishii S."/>
            <person name="Yamamoto J."/>
            <person name="Saito K."/>
            <person name="Kawai Y."/>
            <person name="Isono Y."/>
            <person name="Nakamura Y."/>
            <person name="Nagahari K."/>
            <person name="Murakami K."/>
            <person name="Yasuda T."/>
            <person name="Iwayanagi T."/>
            <person name="Wagatsuma M."/>
            <person name="Shiratori A."/>
            <person name="Sudo H."/>
            <person name="Hosoiri T."/>
            <person name="Kaku Y."/>
            <person name="Kodaira H."/>
            <person name="Kondo H."/>
            <person name="Sugawara M."/>
            <person name="Takahashi M."/>
            <person name="Kanda K."/>
            <person name="Yokoi T."/>
            <person name="Furuya T."/>
            <person name="Kikkawa E."/>
            <person name="Omura Y."/>
            <person name="Abe K."/>
            <person name="Kamihara K."/>
            <person name="Katsuta N."/>
            <person name="Sato K."/>
            <person name="Tanikawa M."/>
            <person name="Yamazaki M."/>
            <person name="Ninomiya K."/>
            <person name="Ishibashi T."/>
            <person name="Yamashita H."/>
            <person name="Murakawa K."/>
            <person name="Fujimori K."/>
            <person name="Tanai H."/>
            <person name="Kimata M."/>
            <person name="Watanabe M."/>
            <person name="Hiraoka S."/>
            <person name="Chiba Y."/>
            <person name="Ishida S."/>
            <person name="Ono Y."/>
            <person name="Takiguchi S."/>
            <person name="Watanabe S."/>
            <person name="Yosida M."/>
            <person name="Hotuta T."/>
            <person name="Kusano J."/>
            <person name="Kanehori K."/>
            <person name="Takahashi-Fujii A."/>
            <person name="Hara H."/>
            <person name="Tanase T.-O."/>
            <person name="Nomura Y."/>
            <person name="Togiya S."/>
            <person name="Komai F."/>
            <person name="Hara R."/>
            <person name="Takeuchi K."/>
            <person name="Arita M."/>
            <person name="Imose N."/>
            <person name="Musashino K."/>
            <person name="Yuuki H."/>
            <person name="Oshima A."/>
            <person name="Sasaki N."/>
            <person name="Aotsuka S."/>
            <person name="Yoshikawa Y."/>
            <person name="Matsunawa H."/>
            <person name="Ichihara T."/>
            <person name="Shiohata N."/>
            <person name="Sano S."/>
            <person name="Moriya S."/>
            <person name="Momiyama H."/>
            <person name="Satoh N."/>
            <person name="Takami S."/>
            <person name="Terashima Y."/>
            <person name="Suzuki O."/>
            <person name="Nakagawa S."/>
            <person name="Senoh A."/>
            <person name="Mizoguchi H."/>
            <person name="Goto Y."/>
            <person name="Shimizu F."/>
            <person name="Wakebe H."/>
            <person name="Hishigaki H."/>
            <person name="Watanabe T."/>
            <person name="Sugiyama A."/>
            <person name="Takemoto M."/>
            <person name="Kawakami B."/>
            <person name="Yamazaki M."/>
            <person name="Watanabe K."/>
            <person name="Kumagai A."/>
            <person name="Itakura S."/>
            <person name="Fukuzumi Y."/>
            <person name="Fujimori Y."/>
            <person name="Komiyama M."/>
            <person name="Tashiro H."/>
            <person name="Tanigami A."/>
            <person name="Fujiwara T."/>
            <person name="Ono T."/>
            <person name="Yamada K."/>
            <person name="Fujii Y."/>
            <person name="Ozaki K."/>
            <person name="Hirao M."/>
            <person name="Ohmori Y."/>
            <person name="Kawabata A."/>
            <person name="Hikiji T."/>
            <person name="Kobatake N."/>
            <person name="Inagaki H."/>
            <person name="Ikema Y."/>
            <person name="Okamoto S."/>
            <person name="Okitani R."/>
            <person name="Kawakami T."/>
            <person name="Noguchi S."/>
            <person name="Itoh T."/>
            <person name="Shigeta K."/>
            <person name="Senba T."/>
            <person name="Matsumura K."/>
            <person name="Nakajima Y."/>
            <person name="Mizuno T."/>
            <person name="Morinaga M."/>
            <person name="Sasaki M."/>
            <person name="Togashi T."/>
            <person name="Oyama M."/>
            <person name="Hata H."/>
            <person name="Watanabe M."/>
            <person name="Komatsu T."/>
            <person name="Mizushima-Sugano J."/>
            <person name="Satoh T."/>
            <person name="Shirai Y."/>
            <person name="Takahashi Y."/>
            <person name="Nakagawa K."/>
            <person name="Okumura K."/>
            <person name="Nagase T."/>
            <person name="Nomura N."/>
            <person name="Kikuchi H."/>
            <person name="Masuho Y."/>
            <person name="Yamashita R."/>
            <person name="Nakai K."/>
            <person name="Yada T."/>
            <person name="Nakamura Y."/>
            <person name="Ohara O."/>
            <person name="Isogai T."/>
            <person name="Sugano S."/>
        </authorList>
    </citation>
    <scope>NUCLEOTIDE SEQUENCE [LARGE SCALE MRNA] (ISOFORM 2)</scope>
    <source>
        <tissue>Testis</tissue>
    </source>
</reference>
<reference key="2">
    <citation type="journal article" date="2007" name="BMC Genomics">
        <title>The full-ORF clone resource of the German cDNA consortium.</title>
        <authorList>
            <person name="Bechtel S."/>
            <person name="Rosenfelder H."/>
            <person name="Duda A."/>
            <person name="Schmidt C.P."/>
            <person name="Ernst U."/>
            <person name="Wellenreuther R."/>
            <person name="Mehrle A."/>
            <person name="Schuster C."/>
            <person name="Bahr A."/>
            <person name="Bloecker H."/>
            <person name="Heubner D."/>
            <person name="Hoerlein A."/>
            <person name="Michel G."/>
            <person name="Wedler H."/>
            <person name="Koehrer K."/>
            <person name="Ottenwaelder B."/>
            <person name="Poustka A."/>
            <person name="Wiemann S."/>
            <person name="Schupp I."/>
        </authorList>
    </citation>
    <scope>NUCLEOTIDE SEQUENCE [LARGE SCALE MRNA] (ISOFORM 2)</scope>
    <source>
        <tissue>Brain</tissue>
    </source>
</reference>
<reference key="3">
    <citation type="submission" date="2005-07" db="EMBL/GenBank/DDBJ databases">
        <authorList>
            <person name="Mural R.J."/>
            <person name="Istrail S."/>
            <person name="Sutton G.G."/>
            <person name="Florea L."/>
            <person name="Halpern A.L."/>
            <person name="Mobarry C.M."/>
            <person name="Lippert R."/>
            <person name="Walenz B."/>
            <person name="Shatkay H."/>
            <person name="Dew I."/>
            <person name="Miller J.R."/>
            <person name="Flanigan M.J."/>
            <person name="Edwards N.J."/>
            <person name="Bolanos R."/>
            <person name="Fasulo D."/>
            <person name="Halldorsson B.V."/>
            <person name="Hannenhalli S."/>
            <person name="Turner R."/>
            <person name="Yooseph S."/>
            <person name="Lu F."/>
            <person name="Nusskern D.R."/>
            <person name="Shue B.C."/>
            <person name="Zheng X.H."/>
            <person name="Zhong F."/>
            <person name="Delcher A.L."/>
            <person name="Huson D.H."/>
            <person name="Kravitz S.A."/>
            <person name="Mouchard L."/>
            <person name="Reinert K."/>
            <person name="Remington K.A."/>
            <person name="Clark A.G."/>
            <person name="Waterman M.S."/>
            <person name="Eichler E.E."/>
            <person name="Adams M.D."/>
            <person name="Hunkapiller M.W."/>
            <person name="Myers E.W."/>
            <person name="Venter J.C."/>
        </authorList>
    </citation>
    <scope>NUCLEOTIDE SEQUENCE [LARGE SCALE GENOMIC DNA]</scope>
</reference>
<reference key="4">
    <citation type="journal article" date="2004" name="Genome Res.">
        <title>The status, quality, and expansion of the NIH full-length cDNA project: the Mammalian Gene Collection (MGC).</title>
        <authorList>
            <consortium name="The MGC Project Team"/>
        </authorList>
    </citation>
    <scope>NUCLEOTIDE SEQUENCE [LARGE SCALE MRNA] (ISOFORMS 1 AND 3)</scope>
    <source>
        <tissue>Cervix</tissue>
        <tissue>Skin</tissue>
    </source>
</reference>
<reference key="5">
    <citation type="journal article" date="2010" name="BMC Biol.">
        <title>ASB9 interacts with ubiquitous mitochondrial creatine kinase and inhibits mitochondrial function.</title>
        <authorList>
            <person name="Kwon S."/>
            <person name="Kim D."/>
            <person name="Rhee J.W."/>
            <person name="Park J.A."/>
            <person name="Kim D.W."/>
            <person name="Kim D.S."/>
            <person name="Lee Y."/>
            <person name="Kwon H.J."/>
        </authorList>
    </citation>
    <scope>FUNCTION (ISOFORMS 1 AND 2)</scope>
    <scope>SUBCELLULAR LOCATION</scope>
    <scope>TISSUE SPECIFICITY</scope>
</reference>
<reference key="6">
    <citation type="journal article" date="2012" name="Proc. Natl. Acad. Sci. U.S.A.">
        <title>N-terminal acetylome analyses and functional insights of the N-terminal acetyltransferase NatB.</title>
        <authorList>
            <person name="Van Damme P."/>
            <person name="Lasa M."/>
            <person name="Polevoda B."/>
            <person name="Gazquez C."/>
            <person name="Elosegui-Artola A."/>
            <person name="Kim D.S."/>
            <person name="De Juan-Pardo E."/>
            <person name="Demeyer K."/>
            <person name="Hole K."/>
            <person name="Larrea E."/>
            <person name="Timmerman E."/>
            <person name="Prieto J."/>
            <person name="Arnesen T."/>
            <person name="Sherman F."/>
            <person name="Gevaert K."/>
            <person name="Aldabe R."/>
        </authorList>
    </citation>
    <scope>ACETYLATION [LARGE SCALE ANALYSIS] AT MET-1</scope>
    <scope>IDENTIFICATION BY MASS SPECTROMETRY [LARGE SCALE ANALYSIS]</scope>
</reference>
<reference key="7">
    <citation type="journal article" date="2014" name="J. Proteomics">
        <title>An enzyme assisted RP-RPLC approach for in-depth analysis of human liver phosphoproteome.</title>
        <authorList>
            <person name="Bian Y."/>
            <person name="Song C."/>
            <person name="Cheng K."/>
            <person name="Dong M."/>
            <person name="Wang F."/>
            <person name="Huang J."/>
            <person name="Sun D."/>
            <person name="Wang L."/>
            <person name="Ye M."/>
            <person name="Zou H."/>
        </authorList>
    </citation>
    <scope>PHOSPHORYLATION [LARGE SCALE ANALYSIS] AT SER-51</scope>
    <scope>IDENTIFICATION BY MASS SPECTROMETRY [LARGE SCALE ANALYSIS]</scope>
    <source>
        <tissue>Liver</tissue>
    </source>
</reference>
<reference key="8">
    <citation type="journal article" date="2015" name="Biochemistry">
        <title>How the ankyrin and SOCS box protein, ASB9, binds to creatine kinase.</title>
        <authorList>
            <person name="Balasubramaniam D."/>
            <person name="Schiffer J."/>
            <person name="Parnell J."/>
            <person name="Mir S.P."/>
            <person name="Amaro R.E."/>
            <person name="Komives E.A."/>
        </authorList>
    </citation>
    <scope>FUNCTION</scope>
    <scope>PATHWAY</scope>
    <scope>MUTAGENESIS OF ASP-32</scope>
</reference>
<reference key="9">
    <citation type="journal article" date="2021" name="Mol. Cell. Proteomics">
        <title>The mechanism of NEDD8 activation of CUL5 Ubiquitin E3 ligases.</title>
        <authorList>
            <person name="Lumpkin R.J."/>
            <person name="Ahmad A.S."/>
            <person name="Blake R."/>
            <person name="Condon C.J."/>
            <person name="Komives E.A."/>
        </authorList>
    </citation>
    <scope>FUNCTION</scope>
    <scope>PATHWAY</scope>
    <scope>IDENTIFICATION IN THE ECS(ASB9) COMPLEX</scope>
</reference>
<reference key="10">
    <citation type="journal article" date="2012" name="Protein J.">
        <title>Crystal structure of human ASB9-2 and substrate-recognition of CKB.</title>
        <authorList>
            <person name="Fei X."/>
            <person name="Gu X."/>
            <person name="Fan S."/>
            <person name="Yang Z."/>
            <person name="Li F."/>
            <person name="Zhang C."/>
            <person name="Gong W."/>
            <person name="Mao Y."/>
            <person name="Ji C."/>
        </authorList>
    </citation>
    <scope>X-RAY CRYSTALLOGRAPHY (2.2 ANGSTROMS) (ISOFORM 2)</scope>
    <scope>FUNCTION</scope>
</reference>
<reference evidence="14" key="11">
    <citation type="journal article" date="2013" name="Biochemistry">
        <title>Multimeric complexes among ankyrin-repeat and SOCS-box protein 9 (ASB9), ElonginBC, and Cullin 5: insights into the structure and assembly of ECS-type Cullin-RING E3 ubiquitin ligases.</title>
        <authorList>
            <person name="Thomas J.C."/>
            <person name="Matak-Vinkovic D."/>
            <person name="Van Molle I."/>
            <person name="Ciulli A."/>
        </authorList>
    </citation>
    <scope>X-RAY CRYSTALLOGRAPHY (2.85 ANGSTROMS) OF 35-294 IN COMPLEX WITH ELOB AND ELOC</scope>
    <scope>IDENTIFICATION IN THE ECS(ASB9) COMPLEX</scope>
</reference>
<reference evidence="15" key="12">
    <citation type="journal article" date="2020" name="Nat. Commun.">
        <title>Structure and dynamics of the ASB9 CUL-RING E3 ligase.</title>
        <authorList>
            <person name="Lumpkin R.J."/>
            <person name="Baker R.W."/>
            <person name="Leschziner A.E."/>
            <person name="Komives E.A."/>
        </authorList>
    </citation>
    <scope>STRUCTURE BY ELECTRON MICROSCOPY (4.10 ANGSTROMS) IN COMPLEX WITH CKB; ELOB AND ELOC</scope>
    <scope>IDENTIFICATION IN THE ECS(ASB9) COMPLEX</scope>
</reference>
<proteinExistence type="evidence at protein level"/>
<organism>
    <name type="scientific">Homo sapiens</name>
    <name type="common">Human</name>
    <dbReference type="NCBI Taxonomy" id="9606"/>
    <lineage>
        <taxon>Eukaryota</taxon>
        <taxon>Metazoa</taxon>
        <taxon>Chordata</taxon>
        <taxon>Craniata</taxon>
        <taxon>Vertebrata</taxon>
        <taxon>Euteleostomi</taxon>
        <taxon>Mammalia</taxon>
        <taxon>Eutheria</taxon>
        <taxon>Euarchontoglires</taxon>
        <taxon>Primates</taxon>
        <taxon>Haplorrhini</taxon>
        <taxon>Catarrhini</taxon>
        <taxon>Hominidae</taxon>
        <taxon>Homo</taxon>
    </lineage>
</organism>
<feature type="chain" id="PRO_0000066940" description="Ankyrin repeat and SOCS box protein 9">
    <location>
        <begin position="1"/>
        <end position="294"/>
    </location>
</feature>
<feature type="repeat" description="ANK 1">
    <location>
        <begin position="35"/>
        <end position="64"/>
    </location>
</feature>
<feature type="repeat" description="ANK 2">
    <location>
        <begin position="68"/>
        <end position="97"/>
    </location>
</feature>
<feature type="repeat" description="ANK 3">
    <location>
        <begin position="101"/>
        <end position="130"/>
    </location>
</feature>
<feature type="repeat" description="ANK 4">
    <location>
        <begin position="133"/>
        <end position="162"/>
    </location>
</feature>
<feature type="repeat" description="ANK 5">
    <location>
        <begin position="166"/>
        <end position="195"/>
    </location>
</feature>
<feature type="repeat" description="ANK 6">
    <location>
        <begin position="198"/>
        <end position="227"/>
    </location>
</feature>
<feature type="domain" description="SOCS box" evidence="1">
    <location>
        <begin position="240"/>
        <end position="294"/>
    </location>
</feature>
<feature type="site" description="Essential for binding to CKB" evidence="3">
    <location>
        <position position="103"/>
    </location>
</feature>
<feature type="site" description="Essential for binding to CKB" evidence="3">
    <location>
        <position position="107"/>
    </location>
</feature>
<feature type="modified residue" description="N-acetylmethionine" evidence="16">
    <location>
        <position position="1"/>
    </location>
</feature>
<feature type="modified residue" description="Phosphoserine" evidence="17">
    <location>
        <position position="51"/>
    </location>
</feature>
<feature type="splice variant" id="VSP_043158" description="In isoform 3." evidence="9">
    <location>
        <begin position="145"/>
        <end position="154"/>
    </location>
</feature>
<feature type="splice variant" id="VSP_000271" description="In isoform 2 and isoform 3." evidence="8 9 10">
    <original>PPSLMQLCRLRIRKCFGIQQHHKITKLVLPEDLKQFLLHL</original>
    <variation>ASLPKPKP</variation>
    <location>
        <begin position="255"/>
        <end position="294"/>
    </location>
</feature>
<feature type="mutagenesis site" description="Decreased ability to mediate ubiquitination of CKB." evidence="5">
    <original>D</original>
    <variation>A</variation>
    <location>
        <position position="32"/>
    </location>
</feature>
<feature type="sequence conflict" description="In Ref. 2; CAB45706." evidence="12" ref="2">
    <original>D</original>
    <variation>V</variation>
    <location>
        <position position="192"/>
    </location>
</feature>
<feature type="sequence conflict" description="In Ref. 2; CAB45706." evidence="12" ref="2">
    <original>E</original>
    <variation>G</variation>
    <location>
        <position position="237"/>
    </location>
</feature>
<feature type="strand" evidence="18">
    <location>
        <begin position="21"/>
        <end position="23"/>
    </location>
</feature>
<feature type="strand" evidence="18">
    <location>
        <begin position="31"/>
        <end position="33"/>
    </location>
</feature>
<feature type="helix" evidence="18">
    <location>
        <begin position="39"/>
        <end position="45"/>
    </location>
</feature>
<feature type="helix" evidence="18">
    <location>
        <begin position="49"/>
        <end position="57"/>
    </location>
</feature>
<feature type="helix" evidence="18">
    <location>
        <begin position="72"/>
        <end position="78"/>
    </location>
</feature>
<feature type="helix" evidence="18">
    <location>
        <begin position="82"/>
        <end position="90"/>
    </location>
</feature>
<feature type="helix" evidence="18">
    <location>
        <begin position="105"/>
        <end position="112"/>
    </location>
</feature>
<feature type="helix" evidence="18">
    <location>
        <begin position="115"/>
        <end position="123"/>
    </location>
</feature>
<feature type="helix" evidence="18">
    <location>
        <begin position="137"/>
        <end position="144"/>
    </location>
</feature>
<feature type="helix" evidence="18">
    <location>
        <begin position="147"/>
        <end position="155"/>
    </location>
</feature>
<feature type="turn" evidence="18">
    <location>
        <begin position="165"/>
        <end position="167"/>
    </location>
</feature>
<feature type="helix" evidence="18">
    <location>
        <begin position="170"/>
        <end position="176"/>
    </location>
</feature>
<feature type="helix" evidence="18">
    <location>
        <begin position="180"/>
        <end position="188"/>
    </location>
</feature>
<feature type="helix" evidence="18">
    <location>
        <begin position="202"/>
        <end position="208"/>
    </location>
</feature>
<feature type="helix" evidence="18">
    <location>
        <begin position="212"/>
        <end position="220"/>
    </location>
</feature>
<feature type="helix" evidence="18">
    <location>
        <begin position="235"/>
        <end position="238"/>
    </location>
</feature>
<feature type="helix" evidence="18">
    <location>
        <begin position="244"/>
        <end position="252"/>
    </location>
</feature>
<feature type="helix" evidence="19">
    <location>
        <begin position="258"/>
        <end position="267"/>
    </location>
</feature>
<feature type="helix" evidence="19">
    <location>
        <begin position="275"/>
        <end position="280"/>
    </location>
</feature>
<feature type="strand" evidence="19">
    <location>
        <begin position="281"/>
        <end position="283"/>
    </location>
</feature>
<feature type="helix" evidence="19">
    <location>
        <begin position="285"/>
        <end position="291"/>
    </location>
</feature>